<reference key="1">
    <citation type="journal article" date="2007" name="PLoS Genet.">
        <title>Patterns and implications of gene gain and loss in the evolution of Prochlorococcus.</title>
        <authorList>
            <person name="Kettler G.C."/>
            <person name="Martiny A.C."/>
            <person name="Huang K."/>
            <person name="Zucker J."/>
            <person name="Coleman M.L."/>
            <person name="Rodrigue S."/>
            <person name="Chen F."/>
            <person name="Lapidus A."/>
            <person name="Ferriera S."/>
            <person name="Johnson J."/>
            <person name="Steglich C."/>
            <person name="Church G.M."/>
            <person name="Richardson P."/>
            <person name="Chisholm S.W."/>
        </authorList>
    </citation>
    <scope>NUCLEOTIDE SEQUENCE [LARGE SCALE GENOMIC DNA]</scope>
    <source>
        <strain>MIT 9211</strain>
    </source>
</reference>
<organism>
    <name type="scientific">Prochlorococcus marinus (strain MIT 9211)</name>
    <dbReference type="NCBI Taxonomy" id="93059"/>
    <lineage>
        <taxon>Bacteria</taxon>
        <taxon>Bacillati</taxon>
        <taxon>Cyanobacteriota</taxon>
        <taxon>Cyanophyceae</taxon>
        <taxon>Synechococcales</taxon>
        <taxon>Prochlorococcaceae</taxon>
        <taxon>Prochlorococcus</taxon>
    </lineage>
</organism>
<accession>A9BCQ0</accession>
<proteinExistence type="inferred from homology"/>
<comment type="function">
    <text evidence="1">Can catalyze the hydrolysis of ATP in the presence of single-stranded DNA, the ATP-dependent uptake of single-stranded DNA by duplex DNA, and the ATP-dependent hybridization of homologous single-stranded DNAs. It interacts with LexA causing its activation and leading to its autocatalytic cleavage.</text>
</comment>
<comment type="subcellular location">
    <subcellularLocation>
        <location evidence="1">Cytoplasm</location>
    </subcellularLocation>
</comment>
<comment type="similarity">
    <text evidence="1">Belongs to the RecA family.</text>
</comment>
<dbReference type="EMBL" id="CP000878">
    <property type="protein sequence ID" value="ABX09612.1"/>
    <property type="molecule type" value="Genomic_DNA"/>
</dbReference>
<dbReference type="RefSeq" id="WP_012196232.1">
    <property type="nucleotide sequence ID" value="NC_009976.1"/>
</dbReference>
<dbReference type="SMR" id="A9BCQ0"/>
<dbReference type="STRING" id="93059.P9211_16811"/>
<dbReference type="KEGG" id="pmj:P9211_16811"/>
<dbReference type="eggNOG" id="COG0468">
    <property type="taxonomic scope" value="Bacteria"/>
</dbReference>
<dbReference type="HOGENOM" id="CLU_040469_3_2_3"/>
<dbReference type="OrthoDB" id="9776733at2"/>
<dbReference type="Proteomes" id="UP000000788">
    <property type="component" value="Chromosome"/>
</dbReference>
<dbReference type="GO" id="GO:0005829">
    <property type="term" value="C:cytosol"/>
    <property type="evidence" value="ECO:0007669"/>
    <property type="project" value="TreeGrafter"/>
</dbReference>
<dbReference type="GO" id="GO:0005524">
    <property type="term" value="F:ATP binding"/>
    <property type="evidence" value="ECO:0007669"/>
    <property type="project" value="UniProtKB-UniRule"/>
</dbReference>
<dbReference type="GO" id="GO:0016887">
    <property type="term" value="F:ATP hydrolysis activity"/>
    <property type="evidence" value="ECO:0007669"/>
    <property type="project" value="InterPro"/>
</dbReference>
<dbReference type="GO" id="GO:0140664">
    <property type="term" value="F:ATP-dependent DNA damage sensor activity"/>
    <property type="evidence" value="ECO:0007669"/>
    <property type="project" value="InterPro"/>
</dbReference>
<dbReference type="GO" id="GO:0003684">
    <property type="term" value="F:damaged DNA binding"/>
    <property type="evidence" value="ECO:0007669"/>
    <property type="project" value="UniProtKB-UniRule"/>
</dbReference>
<dbReference type="GO" id="GO:0003697">
    <property type="term" value="F:single-stranded DNA binding"/>
    <property type="evidence" value="ECO:0007669"/>
    <property type="project" value="UniProtKB-UniRule"/>
</dbReference>
<dbReference type="GO" id="GO:0006310">
    <property type="term" value="P:DNA recombination"/>
    <property type="evidence" value="ECO:0007669"/>
    <property type="project" value="UniProtKB-UniRule"/>
</dbReference>
<dbReference type="GO" id="GO:0006281">
    <property type="term" value="P:DNA repair"/>
    <property type="evidence" value="ECO:0007669"/>
    <property type="project" value="UniProtKB-UniRule"/>
</dbReference>
<dbReference type="GO" id="GO:0009432">
    <property type="term" value="P:SOS response"/>
    <property type="evidence" value="ECO:0007669"/>
    <property type="project" value="UniProtKB-UniRule"/>
</dbReference>
<dbReference type="CDD" id="cd00983">
    <property type="entry name" value="RecA"/>
    <property type="match status" value="1"/>
</dbReference>
<dbReference type="FunFam" id="3.40.50.300:FF:000087">
    <property type="entry name" value="Recombinase RecA"/>
    <property type="match status" value="1"/>
</dbReference>
<dbReference type="Gene3D" id="3.40.50.300">
    <property type="entry name" value="P-loop containing nucleotide triphosphate hydrolases"/>
    <property type="match status" value="1"/>
</dbReference>
<dbReference type="HAMAP" id="MF_00268">
    <property type="entry name" value="RecA"/>
    <property type="match status" value="1"/>
</dbReference>
<dbReference type="InterPro" id="IPR003593">
    <property type="entry name" value="AAA+_ATPase"/>
</dbReference>
<dbReference type="InterPro" id="IPR013765">
    <property type="entry name" value="DNA_recomb/repair_RecA"/>
</dbReference>
<dbReference type="InterPro" id="IPR020584">
    <property type="entry name" value="DNA_recomb/repair_RecA_CS"/>
</dbReference>
<dbReference type="InterPro" id="IPR027417">
    <property type="entry name" value="P-loop_NTPase"/>
</dbReference>
<dbReference type="InterPro" id="IPR049261">
    <property type="entry name" value="RecA-like_C"/>
</dbReference>
<dbReference type="InterPro" id="IPR049428">
    <property type="entry name" value="RecA-like_N"/>
</dbReference>
<dbReference type="InterPro" id="IPR020588">
    <property type="entry name" value="RecA_ATP-bd"/>
</dbReference>
<dbReference type="InterPro" id="IPR023400">
    <property type="entry name" value="RecA_C_sf"/>
</dbReference>
<dbReference type="InterPro" id="IPR020587">
    <property type="entry name" value="RecA_monomer-monomer_interface"/>
</dbReference>
<dbReference type="NCBIfam" id="TIGR02012">
    <property type="entry name" value="tigrfam_recA"/>
    <property type="match status" value="1"/>
</dbReference>
<dbReference type="PANTHER" id="PTHR45900:SF1">
    <property type="entry name" value="MITOCHONDRIAL DNA REPAIR PROTEIN RECA HOMOLOG-RELATED"/>
    <property type="match status" value="1"/>
</dbReference>
<dbReference type="PANTHER" id="PTHR45900">
    <property type="entry name" value="RECA"/>
    <property type="match status" value="1"/>
</dbReference>
<dbReference type="Pfam" id="PF00154">
    <property type="entry name" value="RecA"/>
    <property type="match status" value="1"/>
</dbReference>
<dbReference type="Pfam" id="PF21096">
    <property type="entry name" value="RecA_C"/>
    <property type="match status" value="1"/>
</dbReference>
<dbReference type="PRINTS" id="PR00142">
    <property type="entry name" value="RECA"/>
</dbReference>
<dbReference type="SMART" id="SM00382">
    <property type="entry name" value="AAA"/>
    <property type="match status" value="1"/>
</dbReference>
<dbReference type="SUPFAM" id="SSF52540">
    <property type="entry name" value="P-loop containing nucleoside triphosphate hydrolases"/>
    <property type="match status" value="1"/>
</dbReference>
<dbReference type="SUPFAM" id="SSF54752">
    <property type="entry name" value="RecA protein, C-terminal domain"/>
    <property type="match status" value="1"/>
</dbReference>
<dbReference type="PROSITE" id="PS00321">
    <property type="entry name" value="RECA_1"/>
    <property type="match status" value="1"/>
</dbReference>
<dbReference type="PROSITE" id="PS50162">
    <property type="entry name" value="RECA_2"/>
    <property type="match status" value="1"/>
</dbReference>
<dbReference type="PROSITE" id="PS50163">
    <property type="entry name" value="RECA_3"/>
    <property type="match status" value="1"/>
</dbReference>
<evidence type="ECO:0000255" key="1">
    <source>
        <dbReference type="HAMAP-Rule" id="MF_00268"/>
    </source>
</evidence>
<evidence type="ECO:0000256" key="2">
    <source>
        <dbReference type="SAM" id="MobiDB-lite"/>
    </source>
</evidence>
<name>RECA_PROM4</name>
<keyword id="KW-0067">ATP-binding</keyword>
<keyword id="KW-0963">Cytoplasm</keyword>
<keyword id="KW-0227">DNA damage</keyword>
<keyword id="KW-0233">DNA recombination</keyword>
<keyword id="KW-0234">DNA repair</keyword>
<keyword id="KW-0238">DNA-binding</keyword>
<keyword id="KW-0547">Nucleotide-binding</keyword>
<keyword id="KW-1185">Reference proteome</keyword>
<keyword id="KW-0742">SOS response</keyword>
<sequence>MSTEVNANQSPNAESRQEAARSGERDKALNLVLGQIERNFGKGSIMRLGDASRMRVETISTGALTLDLALGGGYPKGRVVEVYGPESSGKTTLTLHAIAEVQRRGGVAAFVDAEHALDPVYAASLGVDVENLLVSQPDTGEMALEIVDQLIRSAAVELVVVDSVAALTPRAEIEGEMGDHVIGSQARLMSQAMRKITGNIGKSGCTVIFLNQLRLKIGVTYGNPETTTGGNALKFYASVRLDIRRIQTLKRGTDEYGIRAKVKVAKNKVAPPFRIAEFDILFGKGISTIGCLLDLAEETNIVARKGAWYSYEGDNIGQGRDNTITWLEQNTEAKEKIEKLVRQKLTEGSEVSSNSMRPLTTANRKAA</sequence>
<protein>
    <recommendedName>
        <fullName evidence="1">Protein RecA</fullName>
    </recommendedName>
    <alternativeName>
        <fullName evidence="1">Recombinase A</fullName>
    </alternativeName>
</protein>
<feature type="chain" id="PRO_1000114354" description="Protein RecA">
    <location>
        <begin position="1"/>
        <end position="367"/>
    </location>
</feature>
<feature type="region of interest" description="Disordered" evidence="2">
    <location>
        <begin position="1"/>
        <end position="24"/>
    </location>
</feature>
<feature type="region of interest" description="Disordered" evidence="2">
    <location>
        <begin position="348"/>
        <end position="367"/>
    </location>
</feature>
<feature type="compositionally biased region" description="Polar residues" evidence="2">
    <location>
        <begin position="1"/>
        <end position="14"/>
    </location>
</feature>
<feature type="compositionally biased region" description="Basic and acidic residues" evidence="2">
    <location>
        <begin position="15"/>
        <end position="24"/>
    </location>
</feature>
<feature type="compositionally biased region" description="Polar residues" evidence="2">
    <location>
        <begin position="349"/>
        <end position="367"/>
    </location>
</feature>
<feature type="binding site" evidence="1">
    <location>
        <begin position="84"/>
        <end position="91"/>
    </location>
    <ligand>
        <name>ATP</name>
        <dbReference type="ChEBI" id="CHEBI:30616"/>
    </ligand>
</feature>
<gene>
    <name evidence="1" type="primary">recA</name>
    <name type="ordered locus">P9211_16811</name>
</gene>